<evidence type="ECO:0000250" key="1">
    <source>
        <dbReference type="UniProtKB" id="Q96RT8"/>
    </source>
</evidence>
<evidence type="ECO:0000256" key="2">
    <source>
        <dbReference type="SAM" id="MobiDB-lite"/>
    </source>
</evidence>
<evidence type="ECO:0000305" key="3"/>
<organism>
    <name type="scientific">Macaca fascicularis</name>
    <name type="common">Crab-eating macaque</name>
    <name type="synonym">Cynomolgus monkey</name>
    <dbReference type="NCBI Taxonomy" id="9541"/>
    <lineage>
        <taxon>Eukaryota</taxon>
        <taxon>Metazoa</taxon>
        <taxon>Chordata</taxon>
        <taxon>Craniata</taxon>
        <taxon>Vertebrata</taxon>
        <taxon>Euteleostomi</taxon>
        <taxon>Mammalia</taxon>
        <taxon>Eutheria</taxon>
        <taxon>Euarchontoglires</taxon>
        <taxon>Primates</taxon>
        <taxon>Haplorrhini</taxon>
        <taxon>Catarrhini</taxon>
        <taxon>Cercopithecidae</taxon>
        <taxon>Cercopithecinae</taxon>
        <taxon>Macaca</taxon>
    </lineage>
</organism>
<comment type="function">
    <text evidence="1">Component of the gamma-tubulin ring complex (gTuRC) which mediates microtubule nucleation (By similarity). The gTuRC regulates the minus-end nucleation of alpha-beta tubulin heterodimers that grow into microtubule protafilaments, a critical step in centrosome duplication and spindle formation (By similarity).</text>
</comment>
<comment type="subunit">
    <text evidence="1">Component of the gamma-tubulin ring complex (gTuRC) consisting of TUBGCP2, TUBGCP3, TUBGCP4, TUBGCP5 and TUBGCP6 and gamma-tubulin TUBG1 or TUBG2 (By similarity). TUBGCP2, TUBGCP3, TUBGCP4, TUBGCP5 and TUBGCP6 assemble in a 5:5:2:1:1 stoichiometry; each is associated with a gamma-tubulin, thereby arranging 14 gamma-tubulins in a helical manner (By similarity). Gamma-tubulin at the first position is blocked by TUBGCP3 at the last position, allowing 13 protafilaments to grow into a microtubule (By similarity). The gTuRC (via TUBGCP3 and TUBGCP6) interacts with ACTB and MZT1; the interactions form a luminal bridge that stabilizes the initial structure during complex assembly (By similarity). The gTuRC (via TUBGCP2) interacts with MZT2A/MZT2B and CDK5RAP2 (via CM1 motif); the interactions play a role in gTuRC activation (By similarity).</text>
</comment>
<comment type="subcellular location">
    <subcellularLocation>
        <location evidence="1">Cytoplasm</location>
        <location evidence="1">Cytoskeleton</location>
        <location evidence="1">Microtubule organizing center</location>
        <location evidence="1">Centrosome</location>
    </subcellularLocation>
</comment>
<comment type="similarity">
    <text evidence="3">Belongs to the TUBGCP family.</text>
</comment>
<comment type="sequence caution" evidence="3">
    <conflict type="erroneous initiation">
        <sequence resource="EMBL-CDS" id="BAB62963"/>
    </conflict>
</comment>
<feature type="chain" id="PRO_0000078130" description="Gamma-tubulin complex component 5">
    <location>
        <begin position="1" status="less than"/>
        <end position="725"/>
    </location>
</feature>
<feature type="region of interest" description="Disordered" evidence="2">
    <location>
        <begin position="222"/>
        <end position="246"/>
    </location>
</feature>
<feature type="compositionally biased region" description="Low complexity" evidence="2">
    <location>
        <begin position="232"/>
        <end position="244"/>
    </location>
</feature>
<feature type="non-terminal residue">
    <location>
        <position position="1"/>
    </location>
</feature>
<sequence>IIVTHLTHSCLRSVLEQIAAYGQVVFRLQQFIDEVMGHSSESMLPGSGSVPKKSTEAPFRTYQAFMWALYKYFISSKEELAEIEKCIINNDATITLAIVVDKLAPRLAQLKVLHKVFSTGVAEVPPDTRNVVRASHLLNTLYKAILEYDDVGEASEQTVSLLFSLWVETVRPYLQTVDEWIVHGHLWDGAREFIIQRNKNVPVNHRDFWYATYTLYSVSEKTENEEKMSDNASASSGSDQGPSSRQHTMVSFLKPVLKQIIMAGKSMQLLKNLQCAESTTCQAGARDAERKSLYTLFLESVQSRLRHGEDSTPQVLTEQQATKENLMKMQSIAERHLELDDVHDPLLAINFARMYLEQSDFHEKFAGGDVCVDRSSESVTCQTFELTLRSCLYPHIDKQYLDCCGNLMQTLKKDYRLVEYLQAMRNFFLMEGGDTMYDFYTSIFDKIREKETWQNVSFLNVQLQEAVGQRYPEDSSRLSISFENVDTAKKKLPVHILDGLTLSYKVPWPVDIVISLECQKIYNQVFLLLLQIKWAKYSLDVLLFGELVSTAEKPRLQEGLVREQDTVAQFGPQKEPVRQQIHRMFLLRVKLMHFVNSLHNYIMTRILHSTGLEFQHQVEEAKDLDQLIKIHYRYLSTIHDRCLLREKVSFVKEAIMKVLNLALMFADGWQAGLGTWRMESIEKMESDFKNCHMFLVTILNKAVCRGSFPHLESLALSLMAGMEQS</sequence>
<dbReference type="EMBL" id="AB070018">
    <property type="protein sequence ID" value="BAB62963.1"/>
    <property type="status" value="ALT_INIT"/>
    <property type="molecule type" value="mRNA"/>
</dbReference>
<dbReference type="SMR" id="Q95K09"/>
<dbReference type="STRING" id="9541.ENSMFAP00000017669"/>
<dbReference type="eggNOG" id="KOG4344">
    <property type="taxonomic scope" value="Eukaryota"/>
</dbReference>
<dbReference type="Proteomes" id="UP000233100">
    <property type="component" value="Unplaced"/>
</dbReference>
<dbReference type="GO" id="GO:0005813">
    <property type="term" value="C:centrosome"/>
    <property type="evidence" value="ECO:0007669"/>
    <property type="project" value="UniProtKB-SubCell"/>
</dbReference>
<dbReference type="GO" id="GO:0005737">
    <property type="term" value="C:cytoplasm"/>
    <property type="evidence" value="ECO:0007669"/>
    <property type="project" value="UniProtKB-KW"/>
</dbReference>
<dbReference type="GO" id="GO:0000931">
    <property type="term" value="C:gamma-tubulin ring complex"/>
    <property type="evidence" value="ECO:0000250"/>
    <property type="project" value="UniProtKB"/>
</dbReference>
<dbReference type="GO" id="GO:0005874">
    <property type="term" value="C:microtubule"/>
    <property type="evidence" value="ECO:0007669"/>
    <property type="project" value="UniProtKB-KW"/>
</dbReference>
<dbReference type="GO" id="GO:0000922">
    <property type="term" value="C:spindle pole"/>
    <property type="evidence" value="ECO:0007669"/>
    <property type="project" value="InterPro"/>
</dbReference>
<dbReference type="GO" id="GO:0043015">
    <property type="term" value="F:gamma-tubulin binding"/>
    <property type="evidence" value="ECO:0007669"/>
    <property type="project" value="InterPro"/>
</dbReference>
<dbReference type="GO" id="GO:0008017">
    <property type="term" value="F:microtubule binding"/>
    <property type="evidence" value="ECO:0000250"/>
    <property type="project" value="UniProtKB"/>
</dbReference>
<dbReference type="GO" id="GO:0051011">
    <property type="term" value="F:microtubule minus-end binding"/>
    <property type="evidence" value="ECO:0007669"/>
    <property type="project" value="TreeGrafter"/>
</dbReference>
<dbReference type="GO" id="GO:0031122">
    <property type="term" value="P:cytoplasmic microtubule organization"/>
    <property type="evidence" value="ECO:0007669"/>
    <property type="project" value="TreeGrafter"/>
</dbReference>
<dbReference type="GO" id="GO:0051321">
    <property type="term" value="P:meiotic cell cycle"/>
    <property type="evidence" value="ECO:0007669"/>
    <property type="project" value="TreeGrafter"/>
</dbReference>
<dbReference type="GO" id="GO:0007020">
    <property type="term" value="P:microtubule nucleation"/>
    <property type="evidence" value="ECO:0000250"/>
    <property type="project" value="UniProtKB"/>
</dbReference>
<dbReference type="GO" id="GO:0000278">
    <property type="term" value="P:mitotic cell cycle"/>
    <property type="evidence" value="ECO:0007669"/>
    <property type="project" value="TreeGrafter"/>
</dbReference>
<dbReference type="GO" id="GO:0051225">
    <property type="term" value="P:spindle assembly"/>
    <property type="evidence" value="ECO:0007669"/>
    <property type="project" value="TreeGrafter"/>
</dbReference>
<dbReference type="FunFam" id="1.20.120.1900:FF:000005">
    <property type="entry name" value="Gamma-tubulin complex component"/>
    <property type="match status" value="1"/>
</dbReference>
<dbReference type="Gene3D" id="1.20.120.1900">
    <property type="entry name" value="Gamma-tubulin complex, C-terminal domain"/>
    <property type="match status" value="1"/>
</dbReference>
<dbReference type="InterPro" id="IPR007259">
    <property type="entry name" value="GCP"/>
</dbReference>
<dbReference type="InterPro" id="IPR040457">
    <property type="entry name" value="GCP_C"/>
</dbReference>
<dbReference type="InterPro" id="IPR042241">
    <property type="entry name" value="GCP_C_sf"/>
</dbReference>
<dbReference type="InterPro" id="IPR041470">
    <property type="entry name" value="GCP_N"/>
</dbReference>
<dbReference type="PANTHER" id="PTHR19302">
    <property type="entry name" value="GAMMA TUBULIN COMPLEX PROTEIN"/>
    <property type="match status" value="1"/>
</dbReference>
<dbReference type="PANTHER" id="PTHR19302:SF33">
    <property type="entry name" value="GAMMA-TUBULIN COMPLEX COMPONENT 5"/>
    <property type="match status" value="1"/>
</dbReference>
<dbReference type="Pfam" id="PF04130">
    <property type="entry name" value="GCP_C_terminal"/>
    <property type="match status" value="1"/>
</dbReference>
<dbReference type="Pfam" id="PF17681">
    <property type="entry name" value="GCP_N_terminal"/>
    <property type="match status" value="1"/>
</dbReference>
<protein>
    <recommendedName>
        <fullName>Gamma-tubulin complex component 5</fullName>
        <shortName>GCP-5</shortName>
    </recommendedName>
</protein>
<name>GCP5_MACFA</name>
<keyword id="KW-0963">Cytoplasm</keyword>
<keyword id="KW-0206">Cytoskeleton</keyword>
<keyword id="KW-0493">Microtubule</keyword>
<keyword id="KW-1185">Reference proteome</keyword>
<gene>
    <name type="primary">TUBGCP5</name>
    <name type="synonym">GCP5</name>
    <name type="ORF">QtsA-11379</name>
</gene>
<reference key="1">
    <citation type="journal article" date="2002" name="BMC Genomics">
        <title>Cynomolgus monkey testicular cDNAs for discovery of novel human genes in the human genome sequence.</title>
        <authorList>
            <person name="Osada N."/>
            <person name="Hida M."/>
            <person name="Kusuda J."/>
            <person name="Tanuma R."/>
            <person name="Hirata M."/>
            <person name="Suto Y."/>
            <person name="Hirai M."/>
            <person name="Terao K."/>
            <person name="Sugano S."/>
            <person name="Hashimoto K."/>
        </authorList>
    </citation>
    <scope>NUCLEOTIDE SEQUENCE [LARGE SCALE MRNA]</scope>
    <source>
        <tissue>Testis</tissue>
    </source>
</reference>
<proteinExistence type="evidence at transcript level"/>
<accession>Q95K09</accession>